<protein>
    <recommendedName>
        <fullName evidence="3">Protein PIGBOS1</fullName>
    </recommendedName>
    <alternativeName>
        <fullName evidence="5">PIGB opposite strand protein 1</fullName>
    </alternativeName>
</protein>
<evidence type="ECO:0000255" key="1"/>
<evidence type="ECO:0000269" key="2">
    <source>
    </source>
</evidence>
<evidence type="ECO:0000305" key="3"/>
<evidence type="ECO:0000305" key="4">
    <source>
    </source>
</evidence>
<evidence type="ECO:0000312" key="5">
    <source>
        <dbReference type="HGNC" id="HGNC:50696"/>
    </source>
</evidence>
<reference key="1">
    <citation type="journal article" date="2004" name="Nat. Genet.">
        <title>Complete sequencing and characterization of 21,243 full-length human cDNAs.</title>
        <authorList>
            <person name="Ota T."/>
            <person name="Suzuki Y."/>
            <person name="Nishikawa T."/>
            <person name="Otsuki T."/>
            <person name="Sugiyama T."/>
            <person name="Irie R."/>
            <person name="Wakamatsu A."/>
            <person name="Hayashi K."/>
            <person name="Sato H."/>
            <person name="Nagai K."/>
            <person name="Kimura K."/>
            <person name="Makita H."/>
            <person name="Sekine M."/>
            <person name="Obayashi M."/>
            <person name="Nishi T."/>
            <person name="Shibahara T."/>
            <person name="Tanaka T."/>
            <person name="Ishii S."/>
            <person name="Yamamoto J."/>
            <person name="Saito K."/>
            <person name="Kawai Y."/>
            <person name="Isono Y."/>
            <person name="Nakamura Y."/>
            <person name="Nagahari K."/>
            <person name="Murakami K."/>
            <person name="Yasuda T."/>
            <person name="Iwayanagi T."/>
            <person name="Wagatsuma M."/>
            <person name="Shiratori A."/>
            <person name="Sudo H."/>
            <person name="Hosoiri T."/>
            <person name="Kaku Y."/>
            <person name="Kodaira H."/>
            <person name="Kondo H."/>
            <person name="Sugawara M."/>
            <person name="Takahashi M."/>
            <person name="Kanda K."/>
            <person name="Yokoi T."/>
            <person name="Furuya T."/>
            <person name="Kikkawa E."/>
            <person name="Omura Y."/>
            <person name="Abe K."/>
            <person name="Kamihara K."/>
            <person name="Katsuta N."/>
            <person name="Sato K."/>
            <person name="Tanikawa M."/>
            <person name="Yamazaki M."/>
            <person name="Ninomiya K."/>
            <person name="Ishibashi T."/>
            <person name="Yamashita H."/>
            <person name="Murakawa K."/>
            <person name="Fujimori K."/>
            <person name="Tanai H."/>
            <person name="Kimata M."/>
            <person name="Watanabe M."/>
            <person name="Hiraoka S."/>
            <person name="Chiba Y."/>
            <person name="Ishida S."/>
            <person name="Ono Y."/>
            <person name="Takiguchi S."/>
            <person name="Watanabe S."/>
            <person name="Yosida M."/>
            <person name="Hotuta T."/>
            <person name="Kusano J."/>
            <person name="Kanehori K."/>
            <person name="Takahashi-Fujii A."/>
            <person name="Hara H."/>
            <person name="Tanase T.-O."/>
            <person name="Nomura Y."/>
            <person name="Togiya S."/>
            <person name="Komai F."/>
            <person name="Hara R."/>
            <person name="Takeuchi K."/>
            <person name="Arita M."/>
            <person name="Imose N."/>
            <person name="Musashino K."/>
            <person name="Yuuki H."/>
            <person name="Oshima A."/>
            <person name="Sasaki N."/>
            <person name="Aotsuka S."/>
            <person name="Yoshikawa Y."/>
            <person name="Matsunawa H."/>
            <person name="Ichihara T."/>
            <person name="Shiohata N."/>
            <person name="Sano S."/>
            <person name="Moriya S."/>
            <person name="Momiyama H."/>
            <person name="Satoh N."/>
            <person name="Takami S."/>
            <person name="Terashima Y."/>
            <person name="Suzuki O."/>
            <person name="Nakagawa S."/>
            <person name="Senoh A."/>
            <person name="Mizoguchi H."/>
            <person name="Goto Y."/>
            <person name="Shimizu F."/>
            <person name="Wakebe H."/>
            <person name="Hishigaki H."/>
            <person name="Watanabe T."/>
            <person name="Sugiyama A."/>
            <person name="Takemoto M."/>
            <person name="Kawakami B."/>
            <person name="Yamazaki M."/>
            <person name="Watanabe K."/>
            <person name="Kumagai A."/>
            <person name="Itakura S."/>
            <person name="Fukuzumi Y."/>
            <person name="Fujimori Y."/>
            <person name="Komiyama M."/>
            <person name="Tashiro H."/>
            <person name="Tanigami A."/>
            <person name="Fujiwara T."/>
            <person name="Ono T."/>
            <person name="Yamada K."/>
            <person name="Fujii Y."/>
            <person name="Ozaki K."/>
            <person name="Hirao M."/>
            <person name="Ohmori Y."/>
            <person name="Kawabata A."/>
            <person name="Hikiji T."/>
            <person name="Kobatake N."/>
            <person name="Inagaki H."/>
            <person name="Ikema Y."/>
            <person name="Okamoto S."/>
            <person name="Okitani R."/>
            <person name="Kawakami T."/>
            <person name="Noguchi S."/>
            <person name="Itoh T."/>
            <person name="Shigeta K."/>
            <person name="Senba T."/>
            <person name="Matsumura K."/>
            <person name="Nakajima Y."/>
            <person name="Mizuno T."/>
            <person name="Morinaga M."/>
            <person name="Sasaki M."/>
            <person name="Togashi T."/>
            <person name="Oyama M."/>
            <person name="Hata H."/>
            <person name="Watanabe M."/>
            <person name="Komatsu T."/>
            <person name="Mizushima-Sugano J."/>
            <person name="Satoh T."/>
            <person name="Shirai Y."/>
            <person name="Takahashi Y."/>
            <person name="Nakagawa K."/>
            <person name="Okumura K."/>
            <person name="Nagase T."/>
            <person name="Nomura N."/>
            <person name="Kikuchi H."/>
            <person name="Masuho Y."/>
            <person name="Yamashita R."/>
            <person name="Nakai K."/>
            <person name="Yada T."/>
            <person name="Nakamura Y."/>
            <person name="Ohara O."/>
            <person name="Isogai T."/>
            <person name="Sugano S."/>
        </authorList>
    </citation>
    <scope>NUCLEOTIDE SEQUENCE [LARGE SCALE MRNA]</scope>
    <source>
        <tissue>Retinoblastoma</tissue>
    </source>
</reference>
<reference key="2">
    <citation type="journal article" date="2006" name="Nature">
        <title>Analysis of the DNA sequence and duplication history of human chromosome 15.</title>
        <authorList>
            <person name="Zody M.C."/>
            <person name="Garber M."/>
            <person name="Sharpe T."/>
            <person name="Young S.K."/>
            <person name="Rowen L."/>
            <person name="O'Neill K."/>
            <person name="Whittaker C.A."/>
            <person name="Kamal M."/>
            <person name="Chang J.L."/>
            <person name="Cuomo C.A."/>
            <person name="Dewar K."/>
            <person name="FitzGerald M.G."/>
            <person name="Kodira C.D."/>
            <person name="Madan A."/>
            <person name="Qin S."/>
            <person name="Yang X."/>
            <person name="Abbasi N."/>
            <person name="Abouelleil A."/>
            <person name="Arachchi H.M."/>
            <person name="Baradarani L."/>
            <person name="Birditt B."/>
            <person name="Bloom S."/>
            <person name="Bloom T."/>
            <person name="Borowsky M.L."/>
            <person name="Burke J."/>
            <person name="Butler J."/>
            <person name="Cook A."/>
            <person name="DeArellano K."/>
            <person name="DeCaprio D."/>
            <person name="Dorris L. III"/>
            <person name="Dors M."/>
            <person name="Eichler E.E."/>
            <person name="Engels R."/>
            <person name="Fahey J."/>
            <person name="Fleetwood P."/>
            <person name="Friedman C."/>
            <person name="Gearin G."/>
            <person name="Hall J.L."/>
            <person name="Hensley G."/>
            <person name="Johnson E."/>
            <person name="Jones C."/>
            <person name="Kamat A."/>
            <person name="Kaur A."/>
            <person name="Locke D.P."/>
            <person name="Madan A."/>
            <person name="Munson G."/>
            <person name="Jaffe D.B."/>
            <person name="Lui A."/>
            <person name="Macdonald P."/>
            <person name="Mauceli E."/>
            <person name="Naylor J.W."/>
            <person name="Nesbitt R."/>
            <person name="Nicol R."/>
            <person name="O'Leary S.B."/>
            <person name="Ratcliffe A."/>
            <person name="Rounsley S."/>
            <person name="She X."/>
            <person name="Sneddon K.M.B."/>
            <person name="Stewart S."/>
            <person name="Sougnez C."/>
            <person name="Stone S.M."/>
            <person name="Topham K."/>
            <person name="Vincent D."/>
            <person name="Wang S."/>
            <person name="Zimmer A.R."/>
            <person name="Birren B.W."/>
            <person name="Hood L."/>
            <person name="Lander E.S."/>
            <person name="Nusbaum C."/>
        </authorList>
    </citation>
    <scope>NUCLEOTIDE SEQUENCE [LARGE SCALE GENOMIC DNA]</scope>
</reference>
<reference key="3">
    <citation type="journal article" date="2019" name="Nat. Commun.">
        <title>Regulation of the ER stress response by a mitochondrial microprotein.</title>
        <authorList>
            <person name="Chu Q."/>
            <person name="Martinez T.F."/>
            <person name="Novak S.W."/>
            <person name="Donaldson C.J."/>
            <person name="Tan D."/>
            <person name="Vaughan J.M."/>
            <person name="Chang T."/>
            <person name="Diedrich J.K."/>
            <person name="Andrade L."/>
            <person name="Kim A."/>
            <person name="Zhang T."/>
            <person name="Manor U."/>
            <person name="Saghatelian A."/>
        </authorList>
    </citation>
    <scope>PROTEIN SEQUENCE OF 43-52</scope>
    <scope>FUNCTION</scope>
    <scope>HOMOOLIGOMERIZATION</scope>
    <scope>INTERACTION WITH CLCC1</scope>
    <scope>SUBCELLULAR LOCATION</scope>
    <scope>CLCC1-INTERACTING REGION</scope>
    <scope>MUTAGENESIS OF 30-GLU--TYR-32; 34-LYS--GLN-36; 37-LYS--LEU-39; 40-LYS--LYS-42; 43-MET--LEU-45; 46-VAL--GLU-48; 49-SER--GLU-51 AND 52-LYS--SER-54</scope>
</reference>
<dbReference type="EMBL" id="AB593170">
    <property type="status" value="NOT_ANNOTATED_CDS"/>
    <property type="molecule type" value="mRNA"/>
</dbReference>
<dbReference type="EMBL" id="AC018926">
    <property type="status" value="NOT_ANNOTATED_CDS"/>
    <property type="molecule type" value="Genomic_DNA"/>
</dbReference>
<dbReference type="CCDS" id="CCDS81884.1"/>
<dbReference type="RefSeq" id="NP_001295350.1">
    <property type="nucleotide sequence ID" value="NM_001308421.2"/>
</dbReference>
<dbReference type="RefSeq" id="NP_001295351.1">
    <property type="nucleotide sequence ID" value="NM_001308422.2"/>
</dbReference>
<dbReference type="RefSeq" id="NP_001295352.1">
    <property type="nucleotide sequence ID" value="NM_001308423.2"/>
</dbReference>
<dbReference type="RefSeq" id="XP_047288035.1">
    <property type="nucleotide sequence ID" value="XM_047432079.1"/>
</dbReference>
<dbReference type="SMR" id="A0A0B4J2F0"/>
<dbReference type="FunCoup" id="A0A0B4J2F0">
    <property type="interactions" value="16"/>
</dbReference>
<dbReference type="IntAct" id="A0A0B4J2F0">
    <property type="interactions" value="2"/>
</dbReference>
<dbReference type="STRING" id="9606.ENSP00000484893"/>
<dbReference type="BioMuta" id="PIGBOS1"/>
<dbReference type="jPOST" id="A0A0B4J2F0"/>
<dbReference type="MassIVE" id="A0A0B4J2F0"/>
<dbReference type="PaxDb" id="9606-ENSP00000484893"/>
<dbReference type="PeptideAtlas" id="A0A0B4J2F0"/>
<dbReference type="Pumba" id="A0A0B4J2F0"/>
<dbReference type="DNASU" id="101928527"/>
<dbReference type="Ensembl" id="ENST00000436697.3">
    <property type="protein sequence ID" value="ENSP00000484893.1"/>
    <property type="gene ID" value="ENSG00000225973.4"/>
</dbReference>
<dbReference type="Ensembl" id="ENST00000567948.1">
    <property type="protein sequence ID" value="ENSP00000482636.1"/>
    <property type="gene ID" value="ENSG00000225973.4"/>
</dbReference>
<dbReference type="GeneID" id="101928527"/>
<dbReference type="KEGG" id="hsa:101928527"/>
<dbReference type="MANE-Select" id="ENST00000436697.3">
    <property type="protein sequence ID" value="ENSP00000484893.1"/>
    <property type="RefSeq nucleotide sequence ID" value="NM_001308421.2"/>
    <property type="RefSeq protein sequence ID" value="NP_001295350.1"/>
</dbReference>
<dbReference type="AGR" id="HGNC:50696"/>
<dbReference type="CTD" id="101928527"/>
<dbReference type="GeneCards" id="PIGBOS1"/>
<dbReference type="HGNC" id="HGNC:50696">
    <property type="gene designation" value="PIGBOS1"/>
</dbReference>
<dbReference type="HPA" id="ENSG00000225973">
    <property type="expression patterns" value="Low tissue specificity"/>
</dbReference>
<dbReference type="MIM" id="618809">
    <property type="type" value="gene"/>
</dbReference>
<dbReference type="neXtProt" id="NX_A0A0B4J2F0"/>
<dbReference type="VEuPathDB" id="HostDB:ENSG00000225973"/>
<dbReference type="eggNOG" id="ENOG502TEA1">
    <property type="taxonomic scope" value="Eukaryota"/>
</dbReference>
<dbReference type="GeneTree" id="ENSGT00760000120436"/>
<dbReference type="HOGENOM" id="CLU_3049645_0_0_1"/>
<dbReference type="InParanoid" id="A0A0B4J2F0"/>
<dbReference type="OMA" id="GMYIYQP"/>
<dbReference type="OrthoDB" id="9899861at2759"/>
<dbReference type="PAN-GO" id="A0A0B4J2F0">
    <property type="GO annotations" value="0 GO annotations based on evolutionary models"/>
</dbReference>
<dbReference type="PathwayCommons" id="A0A0B4J2F0"/>
<dbReference type="SIGNOR" id="A0A0B4J2F0"/>
<dbReference type="BioGRID-ORCS" id="101928527">
    <property type="hits" value="0 hits in 17 CRISPR screens"/>
</dbReference>
<dbReference type="ChiTaRS" id="PIGBOS1">
    <property type="organism name" value="human"/>
</dbReference>
<dbReference type="Pharos" id="A0A0B4J2F0">
    <property type="development level" value="Tdark"/>
</dbReference>
<dbReference type="PRO" id="PR:A0A0B4J2F0"/>
<dbReference type="Proteomes" id="UP000005640">
    <property type="component" value="Chromosome 15"/>
</dbReference>
<dbReference type="RNAct" id="A0A0B4J2F0">
    <property type="molecule type" value="protein"/>
</dbReference>
<dbReference type="Bgee" id="ENSG00000225973">
    <property type="expression patterns" value="Expressed in monocyte and 98 other cell types or tissues"/>
</dbReference>
<dbReference type="ExpressionAtlas" id="A0A0B4J2F0">
    <property type="expression patterns" value="baseline and differential"/>
</dbReference>
<dbReference type="GO" id="GO:0005741">
    <property type="term" value="C:mitochondrial outer membrane"/>
    <property type="evidence" value="ECO:0000314"/>
    <property type="project" value="UniProtKB"/>
</dbReference>
<dbReference type="GO" id="GO:0005739">
    <property type="term" value="C:mitochondrion"/>
    <property type="evidence" value="ECO:0006056"/>
    <property type="project" value="FlyBase"/>
</dbReference>
<dbReference type="GO" id="GO:1900101">
    <property type="term" value="P:regulation of endoplasmic reticulum unfolded protein response"/>
    <property type="evidence" value="ECO:0000315"/>
    <property type="project" value="UniProtKB"/>
</dbReference>
<dbReference type="GO" id="GO:0006986">
    <property type="term" value="P:response to unfolded protein"/>
    <property type="evidence" value="ECO:0007669"/>
    <property type="project" value="UniProtKB-KW"/>
</dbReference>
<dbReference type="Pfam" id="PF23670">
    <property type="entry name" value="PIGBOS1"/>
    <property type="match status" value="1"/>
</dbReference>
<proteinExistence type="evidence at protein level"/>
<gene>
    <name evidence="5" type="primary">PIGBOS1</name>
</gene>
<organism>
    <name type="scientific">Homo sapiens</name>
    <name type="common">Human</name>
    <dbReference type="NCBI Taxonomy" id="9606"/>
    <lineage>
        <taxon>Eukaryota</taxon>
        <taxon>Metazoa</taxon>
        <taxon>Chordata</taxon>
        <taxon>Craniata</taxon>
        <taxon>Vertebrata</taxon>
        <taxon>Euteleostomi</taxon>
        <taxon>Mammalia</taxon>
        <taxon>Eutheria</taxon>
        <taxon>Euarchontoglires</taxon>
        <taxon>Primates</taxon>
        <taxon>Haplorrhini</taxon>
        <taxon>Catarrhini</taxon>
        <taxon>Hominidae</taxon>
        <taxon>Homo</taxon>
    </lineage>
</organism>
<feature type="chain" id="PRO_0000433799" description="Protein PIGBOS1">
    <location>
        <begin position="1"/>
        <end position="54"/>
    </location>
</feature>
<feature type="topological domain" description="Mitochondrial intermembrane" evidence="4">
    <location>
        <begin position="1"/>
        <end position="4"/>
    </location>
</feature>
<feature type="transmembrane region" description="Helical" evidence="1">
    <location>
        <begin position="5"/>
        <end position="25"/>
    </location>
</feature>
<feature type="topological domain" description="Cytoplasmic" evidence="4">
    <location>
        <begin position="26"/>
        <end position="54"/>
    </location>
</feature>
<feature type="region of interest" description="Required for interaction with CLCC1" evidence="2">
    <location>
        <begin position="30"/>
        <end position="36"/>
    </location>
</feature>
<feature type="mutagenesis site" description="Does not affect mitochondrial location but reduces interaction with CLCC1." evidence="2">
    <original>EQY</original>
    <variation>AAA</variation>
    <location>
        <begin position="30"/>
        <end position="32"/>
    </location>
</feature>
<feature type="mutagenesis site" description="Does not affect mitochondrial location but reduces interaction with CLCC1." evidence="2">
    <original>KDQ</original>
    <variation>AAA</variation>
    <location>
        <begin position="34"/>
        <end position="36"/>
    </location>
</feature>
<feature type="mutagenesis site" description="Does not affect mitochondrial location or interaction with CLCC1." evidence="2">
    <original>KEL</original>
    <variation>AAA</variation>
    <location>
        <begin position="37"/>
        <end position="39"/>
    </location>
</feature>
<feature type="mutagenesis site" description="Does not affect mitochondrial location or interaction with CLCC1." evidence="2">
    <original>KEK</original>
    <variation>AAA</variation>
    <location>
        <begin position="40"/>
        <end position="42"/>
    </location>
</feature>
<feature type="mutagenesis site" description="Does not affect mitochondrial location or interaction with CLCC1." evidence="2">
    <original>MQL</original>
    <variation>AAA</variation>
    <location>
        <begin position="43"/>
        <end position="45"/>
    </location>
</feature>
<feature type="mutagenesis site" description="Does not affect mitochondrial location or interaction with CLCC1." evidence="2">
    <original>VQE</original>
    <variation>AAA</variation>
    <location>
        <begin position="46"/>
        <end position="48"/>
    </location>
</feature>
<feature type="mutagenesis site" description="Does not affect mitochondrial location or interaction with CLCC1." evidence="2">
    <original>SEE</original>
    <variation>AAA</variation>
    <location>
        <begin position="49"/>
        <end position="51"/>
    </location>
</feature>
<feature type="mutagenesis site" description="Does not affect mitochondrial location or interaction with CLCC1." evidence="2">
    <original>KKS</original>
    <variation>AAA</variation>
    <location>
        <begin position="52"/>
        <end position="54"/>
    </location>
</feature>
<comment type="function">
    <text evidence="2">Plays a role in regulation of the unfolded protein response triggered by endoplasmic reticulum (ER) stress resulting from the presence of unfolded proteins in the ER lumen.</text>
</comment>
<comment type="subunit">
    <text evidence="2">Homooligomer (PubMed:31653868). Interacts (via C-terminus) with endoplasmic reticulum (ER) protein CLCC1; the interaction occurs at the mitochondria-associated ER membrane, a zone of contact between the ER and mitochondrial membranes, but does not appear to play a role in ER-mitochondria tethering and is not affected by ER stress (PubMed:31653868).</text>
</comment>
<comment type="interaction">
    <interactant intactId="EBI-26657479">
        <id>A0A0B4J2F0</id>
    </interactant>
    <interactant intactId="EBI-2836109">
        <id>Q96S66</id>
        <label>CLCC1</label>
    </interactant>
    <organismsDiffer>false</organismsDiffer>
    <experiments>11</experiments>
</comment>
<comment type="subcellular location">
    <subcellularLocation>
        <location evidence="2">Mitochondrion outer membrane</location>
        <topology evidence="1">Single-pass membrane protein</topology>
    </subcellularLocation>
</comment>
<name>PIOS1_HUMAN</name>
<keyword id="KW-0903">Direct protein sequencing</keyword>
<keyword id="KW-0472">Membrane</keyword>
<keyword id="KW-0496">Mitochondrion</keyword>
<keyword id="KW-1000">Mitochondrion outer membrane</keyword>
<keyword id="KW-1267">Proteomics identification</keyword>
<keyword id="KW-1185">Reference proteome</keyword>
<keyword id="KW-0812">Transmembrane</keyword>
<keyword id="KW-1133">Transmembrane helix</keyword>
<keyword id="KW-0834">Unfolded protein response</keyword>
<accession>A0A0B4J2F0</accession>
<sequence>MFRRLTFAQLLFATVLGIAGGVYIFQPVFEQYAKDQKELKEKMQLVQESEEKKS</sequence>